<evidence type="ECO:0000250" key="1"/>
<evidence type="ECO:0000250" key="2">
    <source>
        <dbReference type="UniProtKB" id="P62772"/>
    </source>
</evidence>
<evidence type="ECO:0000255" key="3">
    <source>
        <dbReference type="PROSITE-ProRule" id="PRU00433"/>
    </source>
</evidence>
<evidence type="ECO:0000269" key="4">
    <source>
    </source>
</evidence>
<evidence type="ECO:0000269" key="5">
    <source>
    </source>
</evidence>
<evidence type="ECO:0000269" key="6">
    <source>
    </source>
</evidence>
<evidence type="ECO:0000305" key="7"/>
<evidence type="ECO:0007744" key="8">
    <source>
    </source>
</evidence>
<reference key="1">
    <citation type="journal article" date="2000" name="Nature">
        <title>Sequence and analysis of chromosome 1 of the plant Arabidopsis thaliana.</title>
        <authorList>
            <person name="Theologis A."/>
            <person name="Ecker J.R."/>
            <person name="Palm C.J."/>
            <person name="Federspiel N.A."/>
            <person name="Kaul S."/>
            <person name="White O."/>
            <person name="Alonso J."/>
            <person name="Altafi H."/>
            <person name="Araujo R."/>
            <person name="Bowman C.L."/>
            <person name="Brooks S.Y."/>
            <person name="Buehler E."/>
            <person name="Chan A."/>
            <person name="Chao Q."/>
            <person name="Chen H."/>
            <person name="Cheuk R.F."/>
            <person name="Chin C.W."/>
            <person name="Chung M.K."/>
            <person name="Conn L."/>
            <person name="Conway A.B."/>
            <person name="Conway A.R."/>
            <person name="Creasy T.H."/>
            <person name="Dewar K."/>
            <person name="Dunn P."/>
            <person name="Etgu P."/>
            <person name="Feldblyum T.V."/>
            <person name="Feng J.-D."/>
            <person name="Fong B."/>
            <person name="Fujii C.Y."/>
            <person name="Gill J.E."/>
            <person name="Goldsmith A.D."/>
            <person name="Haas B."/>
            <person name="Hansen N.F."/>
            <person name="Hughes B."/>
            <person name="Huizar L."/>
            <person name="Hunter J.L."/>
            <person name="Jenkins J."/>
            <person name="Johnson-Hopson C."/>
            <person name="Khan S."/>
            <person name="Khaykin E."/>
            <person name="Kim C.J."/>
            <person name="Koo H.L."/>
            <person name="Kremenetskaia I."/>
            <person name="Kurtz D.B."/>
            <person name="Kwan A."/>
            <person name="Lam B."/>
            <person name="Langin-Hooper S."/>
            <person name="Lee A."/>
            <person name="Lee J.M."/>
            <person name="Lenz C.A."/>
            <person name="Li J.H."/>
            <person name="Li Y.-P."/>
            <person name="Lin X."/>
            <person name="Liu S.X."/>
            <person name="Liu Z.A."/>
            <person name="Luros J.S."/>
            <person name="Maiti R."/>
            <person name="Marziali A."/>
            <person name="Militscher J."/>
            <person name="Miranda M."/>
            <person name="Nguyen M."/>
            <person name="Nierman W.C."/>
            <person name="Osborne B.I."/>
            <person name="Pai G."/>
            <person name="Peterson J."/>
            <person name="Pham P.K."/>
            <person name="Rizzo M."/>
            <person name="Rooney T."/>
            <person name="Rowley D."/>
            <person name="Sakano H."/>
            <person name="Salzberg S.L."/>
            <person name="Schwartz J.R."/>
            <person name="Shinn P."/>
            <person name="Southwick A.M."/>
            <person name="Sun H."/>
            <person name="Tallon L.J."/>
            <person name="Tambunga G."/>
            <person name="Toriumi M.J."/>
            <person name="Town C.D."/>
            <person name="Utterback T."/>
            <person name="Van Aken S."/>
            <person name="Vaysberg M."/>
            <person name="Vysotskaia V.S."/>
            <person name="Walker M."/>
            <person name="Wu D."/>
            <person name="Yu G."/>
            <person name="Fraser C.M."/>
            <person name="Venter J.C."/>
            <person name="Davis R.W."/>
        </authorList>
    </citation>
    <scope>NUCLEOTIDE SEQUENCE [LARGE SCALE GENOMIC DNA]</scope>
    <source>
        <strain>cv. Columbia</strain>
    </source>
</reference>
<reference key="2">
    <citation type="journal article" date="2017" name="Plant J.">
        <title>Araport11: a complete reannotation of the Arabidopsis thaliana reference genome.</title>
        <authorList>
            <person name="Cheng C.Y."/>
            <person name="Krishnakumar V."/>
            <person name="Chan A.P."/>
            <person name="Thibaud-Nissen F."/>
            <person name="Schobel S."/>
            <person name="Town C.D."/>
        </authorList>
    </citation>
    <scope>GENOME REANNOTATION</scope>
    <source>
        <strain>cv. Columbia</strain>
    </source>
</reference>
<reference key="3">
    <citation type="journal article" date="2003" name="Science">
        <title>Empirical analysis of transcriptional activity in the Arabidopsis genome.</title>
        <authorList>
            <person name="Yamada K."/>
            <person name="Lim J."/>
            <person name="Dale J.M."/>
            <person name="Chen H."/>
            <person name="Shinn P."/>
            <person name="Palm C.J."/>
            <person name="Southwick A.M."/>
            <person name="Wu H.C."/>
            <person name="Kim C.J."/>
            <person name="Nguyen M."/>
            <person name="Pham P.K."/>
            <person name="Cheuk R.F."/>
            <person name="Karlin-Newmann G."/>
            <person name="Liu S.X."/>
            <person name="Lam B."/>
            <person name="Sakano H."/>
            <person name="Wu T."/>
            <person name="Yu G."/>
            <person name="Miranda M."/>
            <person name="Quach H.L."/>
            <person name="Tripp M."/>
            <person name="Chang C.H."/>
            <person name="Lee J.M."/>
            <person name="Toriumi M.J."/>
            <person name="Chan M.M."/>
            <person name="Tang C.C."/>
            <person name="Onodera C.S."/>
            <person name="Deng J.M."/>
            <person name="Akiyama K."/>
            <person name="Ansari Y."/>
            <person name="Arakawa T."/>
            <person name="Banh J."/>
            <person name="Banno F."/>
            <person name="Bowser L."/>
            <person name="Brooks S.Y."/>
            <person name="Carninci P."/>
            <person name="Chao Q."/>
            <person name="Choy N."/>
            <person name="Enju A."/>
            <person name="Goldsmith A.D."/>
            <person name="Gurjal M."/>
            <person name="Hansen N.F."/>
            <person name="Hayashizaki Y."/>
            <person name="Johnson-Hopson C."/>
            <person name="Hsuan V.W."/>
            <person name="Iida K."/>
            <person name="Karnes M."/>
            <person name="Khan S."/>
            <person name="Koesema E."/>
            <person name="Ishida J."/>
            <person name="Jiang P.X."/>
            <person name="Jones T."/>
            <person name="Kawai J."/>
            <person name="Kamiya A."/>
            <person name="Meyers C."/>
            <person name="Nakajima M."/>
            <person name="Narusaka M."/>
            <person name="Seki M."/>
            <person name="Sakurai T."/>
            <person name="Satou M."/>
            <person name="Tamse R."/>
            <person name="Vaysberg M."/>
            <person name="Wallender E.K."/>
            <person name="Wong C."/>
            <person name="Yamamura Y."/>
            <person name="Yuan S."/>
            <person name="Shinozaki K."/>
            <person name="Davis R.W."/>
            <person name="Theologis A."/>
            <person name="Ecker J.R."/>
        </authorList>
    </citation>
    <scope>NUCLEOTIDE SEQUENCE [LARGE SCALE MRNA]</scope>
    <source>
        <strain>cv. Columbia</strain>
    </source>
</reference>
<reference key="4">
    <citation type="submission" date="2002-03" db="EMBL/GenBank/DDBJ databases">
        <title>Full-length cDNA from Arabidopsis thaliana.</title>
        <authorList>
            <person name="Brover V.V."/>
            <person name="Troukhan M.E."/>
            <person name="Alexandrov N.A."/>
            <person name="Lu Y.-P."/>
            <person name="Flavell R.B."/>
            <person name="Feldmann K.A."/>
        </authorList>
    </citation>
    <scope>NUCLEOTIDE SEQUENCE [LARGE SCALE MRNA]</scope>
</reference>
<reference key="5">
    <citation type="journal article" date="2004" name="Plant Cell">
        <title>Experimental analysis of the Arabidopsis mitochondrial proteome highlights signaling and regulatory components, provides assessment of targeting prediction programs, and indicates plant-specific mitochondrial proteins.</title>
        <authorList>
            <person name="Heazlewood J.L."/>
            <person name="Tonti-Filippini J.S."/>
            <person name="Gout A.M."/>
            <person name="Day D.A."/>
            <person name="Whelan J."/>
            <person name="Millar A.H."/>
        </authorList>
    </citation>
    <scope>IDENTIFICATION BY MASS SPECTROMETRY</scope>
    <scope>SUBCELLULAR LOCATION [LARGE SCALE ANALYSIS]</scope>
    <source>
        <strain>cv. Landsberg erecta</strain>
    </source>
</reference>
<reference key="6">
    <citation type="journal article" date="2005" name="Proc. Natl. Acad. Sci. U.S.A.">
        <title>AtCCMH, an essential component of the c-type cytochrome maturation pathway in Arabidopsis mitochondria, interacts with apocytochrome c.</title>
        <authorList>
            <person name="Meyer E.H."/>
            <person name="Giege P."/>
            <person name="Gelhaye E."/>
            <person name="Rayapuram N."/>
            <person name="Ahuja U."/>
            <person name="Thony-Meyer L."/>
            <person name="Grienenberger J.M."/>
            <person name="Bonnard G."/>
        </authorList>
    </citation>
    <scope>INTERACTION WITH CCMH</scope>
</reference>
<reference key="7">
    <citation type="journal article" date="2008" name="J. Biol. Chem.">
        <title>The three mitochondrial encoded CcmF proteins form a complex that interacts with CCMH and c-type apocytochromes in Arabidopsis.</title>
        <authorList>
            <person name="Rayapuram N."/>
            <person name="Hagenmuller J."/>
            <person name="Grienenberger J.M."/>
            <person name="Bonnard G."/>
            <person name="Giege P."/>
        </authorList>
    </citation>
    <scope>INTERACTION WITH CCMFN2</scope>
</reference>
<reference key="8">
    <citation type="journal article" date="2012" name="Mol. Cell. Proteomics">
        <title>Comparative large-scale characterisation of plant vs. mammal proteins reveals similar and idiosyncratic N-alpha acetylation features.</title>
        <authorList>
            <person name="Bienvenut W.V."/>
            <person name="Sumpton D."/>
            <person name="Martinez A."/>
            <person name="Lilla S."/>
            <person name="Espagne C."/>
            <person name="Meinnel T."/>
            <person name="Giglione C."/>
        </authorList>
    </citation>
    <scope>ACETYLATION [LARGE SCALE ANALYSIS] AT ALA-2</scope>
    <scope>CLEAVAGE OF INITIATOR METHIONINE [LARGE SCALE ANALYSIS]</scope>
    <scope>IDENTIFICATION BY MASS SPECTROMETRY [LARGE SCALE ANALYSIS]</scope>
</reference>
<name>CYC1_ARATH</name>
<organism>
    <name type="scientific">Arabidopsis thaliana</name>
    <name type="common">Mouse-ear cress</name>
    <dbReference type="NCBI Taxonomy" id="3702"/>
    <lineage>
        <taxon>Eukaryota</taxon>
        <taxon>Viridiplantae</taxon>
        <taxon>Streptophyta</taxon>
        <taxon>Embryophyta</taxon>
        <taxon>Tracheophyta</taxon>
        <taxon>Spermatophyta</taxon>
        <taxon>Magnoliopsida</taxon>
        <taxon>eudicotyledons</taxon>
        <taxon>Gunneridae</taxon>
        <taxon>Pentapetalae</taxon>
        <taxon>rosids</taxon>
        <taxon>malvids</taxon>
        <taxon>Brassicales</taxon>
        <taxon>Brassicaceae</taxon>
        <taxon>Camelineae</taxon>
        <taxon>Arabidopsis</taxon>
    </lineage>
</organism>
<proteinExistence type="evidence at protein level"/>
<sequence>MASFDEAPPGNAKAGEKIFRTKCAQCHTVEAGAGHKQGPNLNGLFGRQSGTTAGYSYSAANKNKAVEWEEKALYDYLLNPKKYIPGTKMVFPGLKKPQDRADLIAYLKESTAPK</sequence>
<protein>
    <recommendedName>
        <fullName evidence="7">Cytochrome c-1</fullName>
    </recommendedName>
    <alternativeName>
        <fullName>Cytochrome c At1g22840</fullName>
    </alternativeName>
</protein>
<comment type="function">
    <text evidence="1">Electron carrier protein. The oxidized form of the cytochrome c heme group can accept an electron from the heme group of the cytochrome c1 subunit of cytochrome reductase. Cytochrome c then transfers this electron to the cytochrome oxidase complex, the final protein carrier in the mitochondrial electron-transport chain (By similarity).</text>
</comment>
<comment type="subunit">
    <text evidence="5 6">Interacts with CCMH (via N-terminus) (PubMed:16236729). Interacts with CCMFN2 (PubMed:18644794).</text>
</comment>
<comment type="subcellular location">
    <subcellularLocation>
        <location evidence="4">Mitochondrion intermembrane space</location>
    </subcellularLocation>
    <text>Loosely associated with the inner membrane.</text>
</comment>
<comment type="alternative products">
    <event type="alternative splicing"/>
    <isoform>
        <id>O23138-1</id>
        <name>1</name>
        <sequence type="displayed"/>
    </isoform>
    <text>A number of isoforms are produced. According to EST sequences.</text>
</comment>
<comment type="PTM">
    <text evidence="1">Binds 1 heme c group covalently per subunit.</text>
</comment>
<comment type="similarity">
    <text evidence="7">Belongs to the cytochrome c family.</text>
</comment>
<comment type="online information" name="Protein Spotlight">
    <link uri="https://www.proteinspotlight.org/back_issues/076"/>
    <text>Life shuttle - Issue 76 of November 2006</text>
</comment>
<gene>
    <name evidence="7" type="primary">CYTC-1</name>
    <name type="ordered locus">At1g22840</name>
    <name type="ORF">F19G10.20</name>
</gene>
<accession>O23138</accession>
<dbReference type="EMBL" id="AF000657">
    <property type="protein sequence ID" value="AAB72175.1"/>
    <property type="molecule type" value="Genomic_DNA"/>
</dbReference>
<dbReference type="EMBL" id="CP002684">
    <property type="protein sequence ID" value="AEE30294.1"/>
    <property type="molecule type" value="Genomic_DNA"/>
</dbReference>
<dbReference type="EMBL" id="AY062853">
    <property type="protein sequence ID" value="AAL32931.1"/>
    <property type="molecule type" value="mRNA"/>
</dbReference>
<dbReference type="EMBL" id="AY114580">
    <property type="protein sequence ID" value="AAM47899.1"/>
    <property type="molecule type" value="mRNA"/>
</dbReference>
<dbReference type="EMBL" id="AY087108">
    <property type="protein sequence ID" value="AAM64666.1"/>
    <property type="molecule type" value="mRNA"/>
</dbReference>
<dbReference type="PIR" id="C86362">
    <property type="entry name" value="C86362"/>
</dbReference>
<dbReference type="RefSeq" id="NP_173697.1">
    <molecule id="O23138-1"/>
    <property type="nucleotide sequence ID" value="NM_102130.4"/>
</dbReference>
<dbReference type="SMR" id="O23138"/>
<dbReference type="BioGRID" id="24128">
    <property type="interactions" value="10"/>
</dbReference>
<dbReference type="FunCoup" id="O23138">
    <property type="interactions" value="2164"/>
</dbReference>
<dbReference type="IntAct" id="O23138">
    <property type="interactions" value="8"/>
</dbReference>
<dbReference type="STRING" id="3702.O23138"/>
<dbReference type="iPTMnet" id="O23138"/>
<dbReference type="PaxDb" id="3702-AT1G22840.1"/>
<dbReference type="ProteomicsDB" id="222666">
    <molecule id="O23138-1"/>
</dbReference>
<dbReference type="EnsemblPlants" id="AT1G22840.1">
    <molecule id="O23138-1"/>
    <property type="protein sequence ID" value="AT1G22840.1"/>
    <property type="gene ID" value="AT1G22840"/>
</dbReference>
<dbReference type="GeneID" id="838889"/>
<dbReference type="Gramene" id="AT1G22840.1">
    <molecule id="O23138-1"/>
    <property type="protein sequence ID" value="AT1G22840.1"/>
    <property type="gene ID" value="AT1G22840"/>
</dbReference>
<dbReference type="KEGG" id="ath:AT1G22840"/>
<dbReference type="Araport" id="AT1G22840"/>
<dbReference type="TAIR" id="AT1G22840">
    <property type="gene designation" value="CYTC-1"/>
</dbReference>
<dbReference type="eggNOG" id="KOG3453">
    <property type="taxonomic scope" value="Eukaryota"/>
</dbReference>
<dbReference type="HOGENOM" id="CLU_060944_3_0_1"/>
<dbReference type="InParanoid" id="O23138"/>
<dbReference type="OMA" id="MPAPYKK"/>
<dbReference type="OrthoDB" id="449280at2759"/>
<dbReference type="PhylomeDB" id="O23138"/>
<dbReference type="CD-CODE" id="4299E36E">
    <property type="entry name" value="Nucleolus"/>
</dbReference>
<dbReference type="PRO" id="PR:O23138"/>
<dbReference type="Proteomes" id="UP000006548">
    <property type="component" value="Chromosome 1"/>
</dbReference>
<dbReference type="ExpressionAtlas" id="O23138">
    <property type="expression patterns" value="baseline and differential"/>
</dbReference>
<dbReference type="GO" id="GO:0005829">
    <property type="term" value="C:cytosol"/>
    <property type="evidence" value="ECO:0007005"/>
    <property type="project" value="TAIR"/>
</dbReference>
<dbReference type="GO" id="GO:0005758">
    <property type="term" value="C:mitochondrial intermembrane space"/>
    <property type="evidence" value="ECO:0007669"/>
    <property type="project" value="UniProtKB-SubCell"/>
</dbReference>
<dbReference type="GO" id="GO:0005739">
    <property type="term" value="C:mitochondrion"/>
    <property type="evidence" value="ECO:0007005"/>
    <property type="project" value="TAIR"/>
</dbReference>
<dbReference type="GO" id="GO:0005634">
    <property type="term" value="C:nucleus"/>
    <property type="evidence" value="ECO:0007005"/>
    <property type="project" value="TAIR"/>
</dbReference>
<dbReference type="GO" id="GO:0000325">
    <property type="term" value="C:plant-type vacuole"/>
    <property type="evidence" value="ECO:0007005"/>
    <property type="project" value="TAIR"/>
</dbReference>
<dbReference type="GO" id="GO:0005507">
    <property type="term" value="F:copper ion binding"/>
    <property type="evidence" value="ECO:0007005"/>
    <property type="project" value="TAIR"/>
</dbReference>
<dbReference type="GO" id="GO:0009055">
    <property type="term" value="F:electron transfer activity"/>
    <property type="evidence" value="ECO:0007669"/>
    <property type="project" value="InterPro"/>
</dbReference>
<dbReference type="GO" id="GO:0020037">
    <property type="term" value="F:heme binding"/>
    <property type="evidence" value="ECO:0007669"/>
    <property type="project" value="InterPro"/>
</dbReference>
<dbReference type="GO" id="GO:0010336">
    <property type="term" value="P:gibberellic acid homeostasis"/>
    <property type="evidence" value="ECO:0000315"/>
    <property type="project" value="TAIR"/>
</dbReference>
<dbReference type="FunFam" id="1.10.760.10:FF:000001">
    <property type="entry name" value="Cytochrome c iso-1"/>
    <property type="match status" value="1"/>
</dbReference>
<dbReference type="Gene3D" id="1.10.760.10">
    <property type="entry name" value="Cytochrome c-like domain"/>
    <property type="match status" value="1"/>
</dbReference>
<dbReference type="InterPro" id="IPR009056">
    <property type="entry name" value="Cyt_c-like_dom"/>
</dbReference>
<dbReference type="InterPro" id="IPR036909">
    <property type="entry name" value="Cyt_c-like_dom_sf"/>
</dbReference>
<dbReference type="InterPro" id="IPR002327">
    <property type="entry name" value="Cyt_c_1A/1B"/>
</dbReference>
<dbReference type="PANTHER" id="PTHR11961">
    <property type="entry name" value="CYTOCHROME C"/>
    <property type="match status" value="1"/>
</dbReference>
<dbReference type="Pfam" id="PF00034">
    <property type="entry name" value="Cytochrom_C"/>
    <property type="match status" value="1"/>
</dbReference>
<dbReference type="PRINTS" id="PR00604">
    <property type="entry name" value="CYTCHRMECIAB"/>
</dbReference>
<dbReference type="SUPFAM" id="SSF46626">
    <property type="entry name" value="Cytochrome c"/>
    <property type="match status" value="1"/>
</dbReference>
<dbReference type="PROSITE" id="PS51007">
    <property type="entry name" value="CYTC"/>
    <property type="match status" value="1"/>
</dbReference>
<feature type="initiator methionine" description="Removed" evidence="8">
    <location>
        <position position="1"/>
    </location>
</feature>
<feature type="chain" id="PRO_0000108285" description="Cytochrome c-1">
    <location>
        <begin position="2"/>
        <end position="114"/>
    </location>
</feature>
<feature type="binding site" description="covalent" evidence="3">
    <location>
        <position position="23"/>
    </location>
    <ligand>
        <name>heme c</name>
        <dbReference type="ChEBI" id="CHEBI:61717"/>
    </ligand>
</feature>
<feature type="binding site" description="covalent" evidence="3">
    <location>
        <position position="26"/>
    </location>
    <ligand>
        <name>heme c</name>
        <dbReference type="ChEBI" id="CHEBI:61717"/>
    </ligand>
</feature>
<feature type="binding site" description="axial binding residue" evidence="3">
    <location>
        <position position="27"/>
    </location>
    <ligand>
        <name>heme c</name>
        <dbReference type="ChEBI" id="CHEBI:61717"/>
    </ligand>
    <ligandPart>
        <name>Fe</name>
        <dbReference type="ChEBI" id="CHEBI:18248"/>
    </ligandPart>
</feature>
<feature type="binding site" description="axial binding residue" evidence="3">
    <location>
        <position position="89"/>
    </location>
    <ligand>
        <name>heme c</name>
        <dbReference type="ChEBI" id="CHEBI:61717"/>
    </ligand>
    <ligandPart>
        <name>Fe</name>
        <dbReference type="ChEBI" id="CHEBI:18248"/>
    </ligandPart>
</feature>
<feature type="modified residue" description="N-acetylalanine" evidence="8">
    <location>
        <position position="2"/>
    </location>
</feature>
<feature type="modified residue" description="N6,N6,N6-trimethyllysine" evidence="2">
    <location>
        <position position="81"/>
    </location>
</feature>
<feature type="modified residue" description="N6,N6,N6-trimethyllysine" evidence="2">
    <location>
        <position position="95"/>
    </location>
</feature>
<keyword id="KW-0007">Acetylation</keyword>
<keyword id="KW-0025">Alternative splicing</keyword>
<keyword id="KW-0249">Electron transport</keyword>
<keyword id="KW-0349">Heme</keyword>
<keyword id="KW-0408">Iron</keyword>
<keyword id="KW-0479">Metal-binding</keyword>
<keyword id="KW-0488">Methylation</keyword>
<keyword id="KW-0496">Mitochondrion</keyword>
<keyword id="KW-1185">Reference proteome</keyword>
<keyword id="KW-0679">Respiratory chain</keyword>
<keyword id="KW-0813">Transport</keyword>